<evidence type="ECO:0000255" key="1">
    <source>
        <dbReference type="PROSITE-ProRule" id="PRU00061"/>
    </source>
</evidence>
<evidence type="ECO:0000255" key="2">
    <source>
        <dbReference type="PROSITE-ProRule" id="PRU00136"/>
    </source>
</evidence>
<evidence type="ECO:0000256" key="3">
    <source>
        <dbReference type="SAM" id="MobiDB-lite"/>
    </source>
</evidence>
<evidence type="ECO:0000269" key="4">
    <source>
    </source>
</evidence>
<evidence type="ECO:0000269" key="5">
    <source>
    </source>
</evidence>
<evidence type="ECO:0000269" key="6">
    <source>
    </source>
</evidence>
<evidence type="ECO:0000269" key="7">
    <source>
    </source>
</evidence>
<evidence type="ECO:0000269" key="8">
    <source>
    </source>
</evidence>
<evidence type="ECO:0000303" key="9">
    <source>
    </source>
</evidence>
<evidence type="ECO:0000305" key="10"/>
<evidence type="ECO:0007829" key="11">
    <source>
        <dbReference type="PDB" id="2KM6"/>
    </source>
</evidence>
<protein>
    <recommendedName>
        <fullName>NACHT, LRR and PYD domains-containing protein 7</fullName>
    </recommendedName>
    <alternativeName>
        <fullName>Nucleotide-binding oligomerization domain protein 12</fullName>
    </alternativeName>
    <alternativeName>
        <fullName>PYRIN-containing APAF1-like protein 3</fullName>
    </alternativeName>
</protein>
<feature type="chain" id="PRO_0000080895" description="NACHT, LRR and PYD domains-containing protein 7">
    <location>
        <begin position="1"/>
        <end position="980"/>
    </location>
</feature>
<feature type="domain" description="Pyrin" evidence="1">
    <location>
        <begin position="1"/>
        <end position="93"/>
    </location>
</feature>
<feature type="domain" description="NACHT" evidence="2">
    <location>
        <begin position="172"/>
        <end position="491"/>
    </location>
</feature>
<feature type="repeat" description="LRR 1">
    <location>
        <begin position="614"/>
        <end position="638"/>
    </location>
</feature>
<feature type="repeat" description="LRR 2">
    <location>
        <begin position="674"/>
        <end position="697"/>
    </location>
</feature>
<feature type="repeat" description="LRR 3">
    <location>
        <begin position="760"/>
        <end position="784"/>
    </location>
</feature>
<feature type="repeat" description="LRR 4">
    <location>
        <begin position="788"/>
        <end position="810"/>
    </location>
</feature>
<feature type="repeat" description="LRR 5">
    <location>
        <begin position="817"/>
        <end position="840"/>
    </location>
</feature>
<feature type="repeat" description="LRR 6">
    <location>
        <begin position="845"/>
        <end position="868"/>
    </location>
</feature>
<feature type="repeat" description="LRR 7">
    <location>
        <begin position="874"/>
        <end position="897"/>
    </location>
</feature>
<feature type="repeat" description="LRR 8">
    <location>
        <begin position="902"/>
        <end position="928"/>
    </location>
</feature>
<feature type="repeat" description="LRR 9">
    <location>
        <begin position="933"/>
        <end position="957"/>
    </location>
</feature>
<feature type="region of interest" description="Disordered" evidence="3">
    <location>
        <begin position="104"/>
        <end position="123"/>
    </location>
</feature>
<feature type="compositionally biased region" description="Basic and acidic residues" evidence="3">
    <location>
        <begin position="113"/>
        <end position="123"/>
    </location>
</feature>
<feature type="binding site" evidence="2">
    <location>
        <begin position="178"/>
        <end position="185"/>
    </location>
    <ligand>
        <name>ATP</name>
        <dbReference type="ChEBI" id="CHEBI:30616"/>
    </ligand>
</feature>
<feature type="splice variant" id="VSP_016906" description="In isoform 2." evidence="10">
    <location>
        <begin position="644"/>
        <end position="671"/>
    </location>
</feature>
<feature type="splice variant" id="VSP_016907" description="In isoform 2 and isoform 3." evidence="9">
    <original>L</original>
    <variation>LWSCSLMPFYCQHLGSALLSNQKLETLDLGQNHLWKSGIIKLFGVLRQRTGSLKILRL</variation>
    <location>
        <position position="938"/>
    </location>
</feature>
<feature type="sequence variant" id="VAR_085072" description="In HYDM1; uncertain significance; dbSNP:rs77812009." evidence="8">
    <original>Q</original>
    <variation>R</variation>
    <location>
        <position position="310"/>
    </location>
</feature>
<feature type="sequence variant" id="VAR_085073" description="In HYDM1; uncertain significance; dbSNP:rs79513034." evidence="8">
    <original>L</original>
    <variation>I</variation>
    <location>
        <position position="311"/>
    </location>
</feature>
<feature type="sequence variant" id="VAR_026710" description="In HYDM1; uncertain significance; dbSNP:rs775882." evidence="8">
    <original>V</original>
    <variation>I</variation>
    <location>
        <position position="319"/>
    </location>
</feature>
<feature type="sequence variant" id="VAR_085074" description="In HYDM1; uncertain significance; dbSNP:rs10418277." evidence="8">
    <original>K</original>
    <variation>N</variation>
    <location>
        <position position="379"/>
    </location>
</feature>
<feature type="sequence variant" id="VAR_059035" description="In HYDM1; dbSNP:rs104895548." evidence="7">
    <original>L</original>
    <variation>R</variation>
    <location>
        <position position="398"/>
    </location>
</feature>
<feature type="sequence variant" id="VAR_085075" description="In HYDM1; uncertain significance; dbSNP:rs61747414." evidence="4 8">
    <original>A</original>
    <variation>T</variation>
    <location>
        <position position="481"/>
    </location>
</feature>
<feature type="sequence variant" id="VAR_060103" description="In dbSNP:rs775881.">
    <original>G</original>
    <variation>E</variation>
    <location>
        <position position="487"/>
    </location>
</feature>
<feature type="sequence variant" id="VAR_085076" description="In HYDM1; uncertain significance; dbSNP:rs61743949." evidence="8">
    <original>K</original>
    <variation>R</variation>
    <location>
        <position position="511"/>
    </location>
</feature>
<feature type="sequence variant" id="VAR_059036" description="In HYDM1; dbSNP:rs104895549." evidence="7">
    <original>P</original>
    <variation>S</variation>
    <location>
        <position position="651"/>
    </location>
</feature>
<feature type="sequence variant" id="VAR_026711" description="In HYDM1; dbSNP:rs104895502." evidence="6 7">
    <original>R</original>
    <variation>P</variation>
    <location>
        <position position="693"/>
    </location>
</feature>
<feature type="sequence variant" id="VAR_059037" description="In HYDM1; dbSNP:rs104895502." evidence="7">
    <original>R</original>
    <variation>Q</variation>
    <location>
        <position position="693"/>
    </location>
</feature>
<feature type="sequence variant" id="VAR_026712" description="In HYDM1; dbSNP:rs104895506." evidence="6 7">
    <original>R</original>
    <variation>W</variation>
    <location>
        <position position="693"/>
    </location>
</feature>
<feature type="sequence variant" id="VAR_059038" description="In HYDM1; dbSNP:rs104895550." evidence="7">
    <original>P</original>
    <variation>A</variation>
    <location>
        <position position="716"/>
    </location>
</feature>
<feature type="sequence variant" id="VAR_085077" description="In HYDM1; uncertain significance; dbSNP:rs104895526." evidence="8">
    <original>A</original>
    <variation>V</variation>
    <location>
        <position position="719"/>
    </location>
</feature>
<feature type="sequence variant" id="VAR_059039" description="In HYDM1; dbSNP:rs104895525." evidence="7">
    <original>R</original>
    <variation>W</variation>
    <location>
        <position position="721"/>
    </location>
</feature>
<feature type="sequence variant" id="VAR_059040" description="In HYDM1; dbSNP:rs104895552." evidence="7">
    <original>C</original>
    <variation>Y</variation>
    <location>
        <position position="761"/>
    </location>
</feature>
<feature type="sequence variant" id="VAR_085078" description="In HYDM1; uncertain significance." evidence="8">
    <original>N</original>
    <variation>T</variation>
    <location>
        <position position="799"/>
    </location>
</feature>
<feature type="sequence variant" id="VAR_026713" description="In HYDM1; dbSNP:rs104895503." evidence="6 7">
    <original>N</original>
    <variation>S</variation>
    <location>
        <position position="913"/>
    </location>
</feature>
<feature type="sequence variant" id="VAR_026714" description="In dbSNP:rs7256020.">
    <original>T</original>
    <variation>A</variation>
    <location>
        <position position="971"/>
    </location>
</feature>
<feature type="sequence conflict" description="In Ref. 4; AAI09126." evidence="10" ref="4">
    <original>QL</original>
    <variation>RI</variation>
    <location>
        <begin position="310"/>
        <end position="311"/>
    </location>
</feature>
<feature type="helix" evidence="11">
    <location>
        <begin position="4"/>
        <end position="16"/>
    </location>
</feature>
<feature type="helix" evidence="11">
    <location>
        <begin position="21"/>
        <end position="29"/>
    </location>
</feature>
<feature type="helix" evidence="11">
    <location>
        <begin position="38"/>
        <end position="40"/>
    </location>
</feature>
<feature type="helix" evidence="11">
    <location>
        <begin position="43"/>
        <end position="48"/>
    </location>
</feature>
<feature type="helix" evidence="11">
    <location>
        <begin position="52"/>
        <end position="61"/>
    </location>
</feature>
<feature type="helix" evidence="11">
    <location>
        <begin position="64"/>
        <end position="77"/>
    </location>
</feature>
<feature type="helix" evidence="11">
    <location>
        <begin position="84"/>
        <end position="87"/>
    </location>
</feature>
<feature type="turn" evidence="11">
    <location>
        <begin position="88"/>
        <end position="91"/>
    </location>
</feature>
<proteinExistence type="evidence at protein level"/>
<organism>
    <name type="scientific">Homo sapiens</name>
    <name type="common">Human</name>
    <dbReference type="NCBI Taxonomy" id="9606"/>
    <lineage>
        <taxon>Eukaryota</taxon>
        <taxon>Metazoa</taxon>
        <taxon>Chordata</taxon>
        <taxon>Craniata</taxon>
        <taxon>Vertebrata</taxon>
        <taxon>Euteleostomi</taxon>
        <taxon>Mammalia</taxon>
        <taxon>Eutheria</taxon>
        <taxon>Euarchontoglires</taxon>
        <taxon>Primates</taxon>
        <taxon>Haplorrhini</taxon>
        <taxon>Catarrhini</taxon>
        <taxon>Hominidae</taxon>
        <taxon>Homo</taxon>
    </lineage>
</organism>
<comment type="function">
    <text evidence="5">Inhibits CASP1/caspase-1-dependent IL1B secretion.</text>
</comment>
<comment type="subunit">
    <text evidence="5">Directly interacts with CASP1 and IL1B.</text>
</comment>
<comment type="interaction">
    <interactant intactId="EBI-21978841">
        <id>Q8WX94-3</id>
    </interactant>
    <interactant intactId="EBI-21978841">
        <id>Q8WX94-3</id>
        <label>NLRP7</label>
    </interactant>
    <organismsDiffer>false</organismsDiffer>
    <experiments>7</experiments>
</comment>
<comment type="alternative products">
    <event type="alternative splicing"/>
    <isoform>
        <id>Q8WX94-1</id>
        <name>1</name>
        <sequence type="displayed"/>
    </isoform>
    <isoform>
        <id>Q8WX94-2</id>
        <name>2</name>
        <sequence type="described" ref="VSP_016906 VSP_016907"/>
    </isoform>
    <isoform>
        <id>Q8WX94-3</id>
        <name>3</name>
        <sequence type="described" ref="VSP_016907"/>
    </isoform>
</comment>
<comment type="tissue specificity">
    <text evidence="5 6">Expressed in numerous tissues including uterus and ovary, with low levels in heart and brain. Not detected in skeletal muscle.</text>
</comment>
<comment type="induction">
    <text>By bacterial lipopolysaccharides (LPS) and IL1B/interleukin-1 beta in peripheral blood mononuclear cells.</text>
</comment>
<comment type="disease" evidence="6 7 8">
    <disease id="DI-01758">
        <name>Hydatidiform mole, recurrent, 1</name>
        <acronym>HYDM1</acronym>
        <description>A disorder characterized by excessive trophoblast development that produces a growing mass of tissue inside the uterus at the beginning of a pregnancy. It leads to abnormal pregnancies with no embryo, and cystic degeneration of the chorionic villi.</description>
        <dbReference type="MIM" id="231090"/>
    </disease>
    <text>The disease is caused by variants affecting the gene represented in this entry.</text>
</comment>
<comment type="similarity">
    <text evidence="10">Belongs to the NLRP family.</text>
</comment>
<comment type="online information" name="INFEVERS">
    <link uri="https://infevers.umai-montpellier.fr/web/search.php?n=8"/>
    <text>Repertory of FMF and hereditary autoinflammatory disorders mutations</text>
</comment>
<dbReference type="EMBL" id="AF464765">
    <property type="protein sequence ID" value="AAL69963.1"/>
    <property type="molecule type" value="mRNA"/>
</dbReference>
<dbReference type="EMBL" id="AY154462">
    <property type="protein sequence ID" value="AAO18158.1"/>
    <property type="molecule type" value="mRNA"/>
</dbReference>
<dbReference type="EMBL" id="AC011476">
    <property type="status" value="NOT_ANNOTATED_CDS"/>
    <property type="molecule type" value="Genomic_DNA"/>
</dbReference>
<dbReference type="EMBL" id="BC109125">
    <property type="protein sequence ID" value="AAI09126.1"/>
    <property type="molecule type" value="mRNA"/>
</dbReference>
<dbReference type="EMBL" id="BK001113">
    <property type="protein sequence ID" value="DAA01246.1"/>
    <property type="molecule type" value="mRNA"/>
</dbReference>
<dbReference type="CCDS" id="CCDS12912.1">
    <molecule id="Q8WX94-2"/>
</dbReference>
<dbReference type="CCDS" id="CCDS33109.1">
    <molecule id="Q8WX94-1"/>
</dbReference>
<dbReference type="CCDS" id="CCDS46183.1">
    <molecule id="Q8WX94-3"/>
</dbReference>
<dbReference type="RefSeq" id="NP_001120727.1">
    <molecule id="Q8WX94-3"/>
    <property type="nucleotide sequence ID" value="NM_001127255.2"/>
</dbReference>
<dbReference type="RefSeq" id="NP_001392460.1">
    <molecule id="Q8WX94-3"/>
    <property type="nucleotide sequence ID" value="NM_001405531.1"/>
</dbReference>
<dbReference type="RefSeq" id="NP_631915.2">
    <molecule id="Q8WX94-2"/>
    <property type="nucleotide sequence ID" value="NM_139176.3"/>
</dbReference>
<dbReference type="RefSeq" id="NP_996611.2">
    <molecule id="Q8WX94-1"/>
    <property type="nucleotide sequence ID" value="NM_206828.4"/>
</dbReference>
<dbReference type="RefSeq" id="XP_006723138.1">
    <property type="nucleotide sequence ID" value="XM_006723075.3"/>
</dbReference>
<dbReference type="RefSeq" id="XP_006723139.1">
    <property type="nucleotide sequence ID" value="XM_006723076.3"/>
</dbReference>
<dbReference type="RefSeq" id="XP_011524901.1">
    <property type="nucleotide sequence ID" value="XM_011526599.2"/>
</dbReference>
<dbReference type="RefSeq" id="XP_054185642.1">
    <molecule id="Q8WX94-3"/>
    <property type="nucleotide sequence ID" value="XM_054329667.1"/>
</dbReference>
<dbReference type="RefSeq" id="XP_054185643.1">
    <molecule id="Q8WX94-3"/>
    <property type="nucleotide sequence ID" value="XM_054329668.1"/>
</dbReference>
<dbReference type="RefSeq" id="XP_054185644.1">
    <molecule id="Q8WX94-3"/>
    <property type="nucleotide sequence ID" value="XM_054329669.1"/>
</dbReference>
<dbReference type="RefSeq" id="XP_054186121.1">
    <molecule id="Q8WX94-3"/>
    <property type="nucleotide sequence ID" value="XM_054330146.1"/>
</dbReference>
<dbReference type="RefSeq" id="XP_054186122.1">
    <molecule id="Q8WX94-3"/>
    <property type="nucleotide sequence ID" value="XM_054330147.1"/>
</dbReference>
<dbReference type="RefSeq" id="XP_054186123.1">
    <molecule id="Q8WX94-3"/>
    <property type="nucleotide sequence ID" value="XM_054330148.1"/>
</dbReference>
<dbReference type="RefSeq" id="XP_054186434.1">
    <molecule id="Q8WX94-3"/>
    <property type="nucleotide sequence ID" value="XM_054330459.1"/>
</dbReference>
<dbReference type="RefSeq" id="XP_054186435.1">
    <molecule id="Q8WX94-3"/>
    <property type="nucleotide sequence ID" value="XM_054330460.1"/>
</dbReference>
<dbReference type="RefSeq" id="XP_054186436.1">
    <molecule id="Q8WX94-3"/>
    <property type="nucleotide sequence ID" value="XM_054330461.1"/>
</dbReference>
<dbReference type="RefSeq" id="XP_054186687.1">
    <molecule id="Q8WX94-3"/>
    <property type="nucleotide sequence ID" value="XM_054330712.1"/>
</dbReference>
<dbReference type="RefSeq" id="XP_054186688.1">
    <molecule id="Q8WX94-3"/>
    <property type="nucleotide sequence ID" value="XM_054330713.1"/>
</dbReference>
<dbReference type="RefSeq" id="XP_054186689.1">
    <molecule id="Q8WX94-3"/>
    <property type="nucleotide sequence ID" value="XM_054330714.1"/>
</dbReference>
<dbReference type="RefSeq" id="XP_054186918.1">
    <molecule id="Q8WX94-3"/>
    <property type="nucleotide sequence ID" value="XM_054330943.1"/>
</dbReference>
<dbReference type="RefSeq" id="XP_054186919.1">
    <molecule id="Q8WX94-3"/>
    <property type="nucleotide sequence ID" value="XM_054330944.1"/>
</dbReference>
<dbReference type="RefSeq" id="XP_054186920.1">
    <molecule id="Q8WX94-3"/>
    <property type="nucleotide sequence ID" value="XM_054330945.1"/>
</dbReference>
<dbReference type="RefSeq" id="XP_054187196.1">
    <molecule id="Q8WX94-3"/>
    <property type="nucleotide sequence ID" value="XM_054331221.1"/>
</dbReference>
<dbReference type="RefSeq" id="XP_054187197.1">
    <molecule id="Q8WX94-3"/>
    <property type="nucleotide sequence ID" value="XM_054331222.1"/>
</dbReference>
<dbReference type="RefSeq" id="XP_054187198.1">
    <molecule id="Q8WX94-3"/>
    <property type="nucleotide sequence ID" value="XM_054331223.1"/>
</dbReference>
<dbReference type="RefSeq" id="XP_054189507.1">
    <molecule id="Q8WX94-3"/>
    <property type="nucleotide sequence ID" value="XM_054333532.1"/>
</dbReference>
<dbReference type="RefSeq" id="XP_054189508.1">
    <molecule id="Q8WX94-3"/>
    <property type="nucleotide sequence ID" value="XM_054333533.1"/>
</dbReference>
<dbReference type="RefSeq" id="XP_054189509.1">
    <molecule id="Q8WX94-3"/>
    <property type="nucleotide sequence ID" value="XM_054333534.1"/>
</dbReference>
<dbReference type="RefSeq" id="XP_054189605.1">
    <molecule id="Q8WX94-3"/>
    <property type="nucleotide sequence ID" value="XM_054333630.1"/>
</dbReference>
<dbReference type="RefSeq" id="XP_054189606.1">
    <molecule id="Q8WX94-3"/>
    <property type="nucleotide sequence ID" value="XM_054333631.1"/>
</dbReference>
<dbReference type="RefSeq" id="XP_054189607.1">
    <molecule id="Q8WX94-3"/>
    <property type="nucleotide sequence ID" value="XM_054333632.1"/>
</dbReference>
<dbReference type="PDB" id="2KM6">
    <property type="method" value="NMR"/>
    <property type="chains" value="A=1-96"/>
</dbReference>
<dbReference type="PDBsum" id="2KM6"/>
<dbReference type="BMRB" id="Q8WX94"/>
<dbReference type="SMR" id="Q8WX94"/>
<dbReference type="BioGRID" id="128265">
    <property type="interactions" value="163"/>
</dbReference>
<dbReference type="ComplexPortal" id="CPX-2210">
    <property type="entry name" value="Subcortical maternal complex"/>
</dbReference>
<dbReference type="CORUM" id="Q8WX94"/>
<dbReference type="FunCoup" id="Q8WX94">
    <property type="interactions" value="182"/>
</dbReference>
<dbReference type="IntAct" id="Q8WX94">
    <property type="interactions" value="8"/>
</dbReference>
<dbReference type="STRING" id="9606.ENSP00000467123"/>
<dbReference type="iPTMnet" id="Q8WX94"/>
<dbReference type="PhosphoSitePlus" id="Q8WX94"/>
<dbReference type="BioMuta" id="NLRP7"/>
<dbReference type="DMDM" id="24212128"/>
<dbReference type="jPOST" id="Q8WX94"/>
<dbReference type="MassIVE" id="Q8WX94"/>
<dbReference type="PaxDb" id="9606-ENSP00000467123"/>
<dbReference type="PeptideAtlas" id="Q8WX94"/>
<dbReference type="ProteomicsDB" id="74988">
    <molecule id="Q8WX94-1"/>
</dbReference>
<dbReference type="ProteomicsDB" id="74989">
    <molecule id="Q8WX94-2"/>
</dbReference>
<dbReference type="ProteomicsDB" id="74990">
    <molecule id="Q8WX94-3"/>
</dbReference>
<dbReference type="Antibodypedia" id="46386">
    <property type="antibodies" value="152 antibodies from 30 providers"/>
</dbReference>
<dbReference type="DNASU" id="199713"/>
<dbReference type="Ensembl" id="ENST00000328092.9">
    <molecule id="Q8WX94-2"/>
    <property type="protein sequence ID" value="ENSP00000329568.5"/>
    <property type="gene ID" value="ENSG00000167634.12"/>
</dbReference>
<dbReference type="Ensembl" id="ENST00000340844.6">
    <molecule id="Q8WX94-1"/>
    <property type="protein sequence ID" value="ENSP00000339491.2"/>
    <property type="gene ID" value="ENSG00000167634.12"/>
</dbReference>
<dbReference type="Ensembl" id="ENST00000588756.5">
    <molecule id="Q8WX94-3"/>
    <property type="protein sequence ID" value="ENSP00000467123.1"/>
    <property type="gene ID" value="ENSG00000167634.12"/>
</dbReference>
<dbReference type="Ensembl" id="ENST00000590030.5">
    <molecule id="Q8WX94-1"/>
    <property type="protein sequence ID" value="ENSP00000465520.1"/>
    <property type="gene ID" value="ENSG00000167634.12"/>
</dbReference>
<dbReference type="Ensembl" id="ENST00000592784.6">
    <molecule id="Q8WX94-3"/>
    <property type="protein sequence ID" value="ENSP00000468706.1"/>
    <property type="gene ID" value="ENSG00000167634.12"/>
</dbReference>
<dbReference type="Ensembl" id="ENST00000610424.4">
    <molecule id="Q8WX94-3"/>
    <property type="protein sequence ID" value="ENSP00000482887.1"/>
    <property type="gene ID" value="ENSG00000274571.4"/>
</dbReference>
<dbReference type="Ensembl" id="ENST00000610790.1">
    <molecule id="Q8WX94-1"/>
    <property type="protein sequence ID" value="ENSP00000478726.1"/>
    <property type="gene ID" value="ENSG00000274571.4"/>
</dbReference>
<dbReference type="Ensembl" id="ENST00000610853.4">
    <molecule id="Q8WX94-2"/>
    <property type="protein sequence ID" value="ENSP00000478890.1"/>
    <property type="gene ID" value="ENSG00000274571.4"/>
</dbReference>
<dbReference type="Ensembl" id="ENST00000610981.4">
    <molecule id="Q8WX94-3"/>
    <property type="protein sequence ID" value="ENSP00000479459.1"/>
    <property type="gene ID" value="ENSG00000277776.4"/>
</dbReference>
<dbReference type="Ensembl" id="ENST00000611597.4">
    <molecule id="Q8WX94-1"/>
    <property type="protein sequence ID" value="ENSP00000481117.1"/>
    <property type="gene ID" value="ENSG00000274571.4"/>
</dbReference>
<dbReference type="Ensembl" id="ENST00000613233.1">
    <molecule id="Q8WX94-1"/>
    <property type="protein sequence ID" value="ENSP00000483203.1"/>
    <property type="gene ID" value="ENSG00000277776.4"/>
</dbReference>
<dbReference type="Ensembl" id="ENST00000614879.1">
    <molecule id="Q8WX94-1"/>
    <property type="protein sequence ID" value="ENSP00000484444.1"/>
    <property type="gene ID" value="ENSG00000277071.4"/>
</dbReference>
<dbReference type="Ensembl" id="ENST00000615426.4">
    <molecule id="Q8WX94-3"/>
    <property type="protein sequence ID" value="ENSP00000484426.1"/>
    <property type="gene ID" value="ENSG00000277071.4"/>
</dbReference>
<dbReference type="Ensembl" id="ENST00000615699.1">
    <molecule id="Q8WX94-1"/>
    <property type="protein sequence ID" value="ENSP00000480449.1"/>
    <property type="gene ID" value="ENSG00000277786.4"/>
</dbReference>
<dbReference type="Ensembl" id="ENST00000618261.1">
    <molecule id="Q8WX94-1"/>
    <property type="protein sequence ID" value="ENSP00000483353.1"/>
    <property type="gene ID" value="ENSG00000277179.4"/>
</dbReference>
<dbReference type="Ensembl" id="ENST00000618343.4">
    <molecule id="Q8WX94-3"/>
    <property type="protein sequence ID" value="ENSP00000480226.1"/>
    <property type="gene ID" value="ENSG00000274174.4"/>
</dbReference>
<dbReference type="Ensembl" id="ENST00000618672.4">
    <molecule id="Q8WX94-3"/>
    <property type="protein sequence ID" value="ENSP00000481452.1"/>
    <property type="gene ID" value="ENSG00000277179.4"/>
</dbReference>
<dbReference type="Ensembl" id="ENST00000618740.4">
    <molecule id="Q8WX94-3"/>
    <property type="protein sequence ID" value="ENSP00000484808.1"/>
    <property type="gene ID" value="ENSG00000277786.4"/>
</dbReference>
<dbReference type="Ensembl" id="ENST00000618995.1">
    <molecule id="Q8WX94-1"/>
    <property type="protein sequence ID" value="ENSP00000481809.1"/>
    <property type="gene ID" value="ENSG00000276804.4"/>
</dbReference>
<dbReference type="Ensembl" id="ENST00000620183.1">
    <molecule id="Q8WX94-1"/>
    <property type="protein sequence ID" value="ENSP00000480034.1"/>
    <property type="gene ID" value="ENSG00000274174.4"/>
</dbReference>
<dbReference type="Ensembl" id="ENST00000620820.4">
    <molecule id="Q8WX94-3"/>
    <property type="protein sequence ID" value="ENSP00000482551.1"/>
    <property type="gene ID" value="ENSG00000276804.4"/>
</dbReference>
<dbReference type="Ensembl" id="ENST00000621238.4">
    <molecule id="Q8WX94-3"/>
    <property type="protein sequence ID" value="ENSP00000481395.1"/>
    <property type="gene ID" value="ENSG00000274571.4"/>
</dbReference>
<dbReference type="Ensembl" id="ENST00000621584.1">
    <molecule id="Q8WX94-1"/>
    <property type="protein sequence ID" value="ENSP00000479541.1"/>
    <property type="gene ID" value="ENSG00000275483.4"/>
</dbReference>
<dbReference type="Ensembl" id="ENST00000622199.4">
    <molecule id="Q8WX94-3"/>
    <property type="protein sequence ID" value="ENSP00000482194.1"/>
    <property type="gene ID" value="ENSG00000275483.4"/>
</dbReference>
<dbReference type="GeneID" id="199713"/>
<dbReference type="KEGG" id="hsa:199713"/>
<dbReference type="MANE-Select" id="ENST00000592784.6">
    <molecule id="Q8WX94-3"/>
    <property type="protein sequence ID" value="ENSP00000468706.1"/>
    <property type="RefSeq nucleotide sequence ID" value="NM_001127255.2"/>
    <property type="RefSeq protein sequence ID" value="NP_001120727.1"/>
</dbReference>
<dbReference type="UCSC" id="uc002qih.4">
    <molecule id="Q8WX94-1"/>
    <property type="organism name" value="human"/>
</dbReference>
<dbReference type="AGR" id="HGNC:22947"/>
<dbReference type="CTD" id="199713"/>
<dbReference type="DisGeNET" id="199713"/>
<dbReference type="GeneCards" id="NLRP7"/>
<dbReference type="HGNC" id="HGNC:22947">
    <property type="gene designation" value="NLRP7"/>
</dbReference>
<dbReference type="HPA" id="ENSG00000167634">
    <property type="expression patterns" value="Tissue enriched (testis)"/>
</dbReference>
<dbReference type="MalaCards" id="NLRP7"/>
<dbReference type="MIM" id="231090">
    <property type="type" value="phenotype"/>
</dbReference>
<dbReference type="MIM" id="609661">
    <property type="type" value="gene"/>
</dbReference>
<dbReference type="neXtProt" id="NX_Q8WX94"/>
<dbReference type="OpenTargets" id="ENSG00000167634"/>
<dbReference type="Orphanet" id="254688">
    <property type="disease" value="Complete hydatidiform mole"/>
</dbReference>
<dbReference type="Orphanet" id="254693">
    <property type="disease" value="Partial hydatidiform mole"/>
</dbReference>
<dbReference type="PharmGKB" id="PA162398003"/>
<dbReference type="VEuPathDB" id="HostDB:ENSG00000167634"/>
<dbReference type="eggNOG" id="ENOG502S92U">
    <property type="taxonomic scope" value="Eukaryota"/>
</dbReference>
<dbReference type="GeneTree" id="ENSGT00940000164627"/>
<dbReference type="HOGENOM" id="CLU_002274_2_1_1"/>
<dbReference type="InParanoid" id="Q8WX94"/>
<dbReference type="OMA" id="TRQWADF"/>
<dbReference type="OrthoDB" id="120976at2759"/>
<dbReference type="PAN-GO" id="Q8WX94">
    <property type="GO annotations" value="3 GO annotations based on evolutionary models"/>
</dbReference>
<dbReference type="PhylomeDB" id="Q8WX94"/>
<dbReference type="PathwayCommons" id="Q8WX94"/>
<dbReference type="SignaLink" id="Q8WX94"/>
<dbReference type="BioGRID-ORCS" id="199713">
    <property type="hits" value="11 hits in 1140 CRISPR screens"/>
</dbReference>
<dbReference type="EvolutionaryTrace" id="Q8WX94"/>
<dbReference type="GeneWiki" id="NLRP7"/>
<dbReference type="GenomeRNAi" id="199713"/>
<dbReference type="Pharos" id="Q8WX94">
    <property type="development level" value="Tbio"/>
</dbReference>
<dbReference type="PRO" id="PR:Q8WX94"/>
<dbReference type="Proteomes" id="UP000005640">
    <property type="component" value="Chromosome 19"/>
</dbReference>
<dbReference type="RNAct" id="Q8WX94">
    <property type="molecule type" value="protein"/>
</dbReference>
<dbReference type="Bgee" id="ENSG00000167634">
    <property type="expression patterns" value="Expressed in primordial germ cell in gonad and 37 other cell types or tissues"/>
</dbReference>
<dbReference type="ExpressionAtlas" id="Q8WX94">
    <property type="expression patterns" value="baseline and differential"/>
</dbReference>
<dbReference type="GO" id="GO:0005737">
    <property type="term" value="C:cytoplasm"/>
    <property type="evidence" value="ECO:0000318"/>
    <property type="project" value="GO_Central"/>
</dbReference>
<dbReference type="GO" id="GO:0019828">
    <property type="term" value="F:aspartic-type endopeptidase inhibitor activity"/>
    <property type="evidence" value="ECO:0000314"/>
    <property type="project" value="UniProtKB"/>
</dbReference>
<dbReference type="GO" id="GO:0005524">
    <property type="term" value="F:ATP binding"/>
    <property type="evidence" value="ECO:0007669"/>
    <property type="project" value="UniProtKB-KW"/>
</dbReference>
<dbReference type="GO" id="GO:0089720">
    <property type="term" value="F:caspase binding"/>
    <property type="evidence" value="ECO:0000353"/>
    <property type="project" value="UniProtKB"/>
</dbReference>
<dbReference type="GO" id="GO:0042802">
    <property type="term" value="F:identical protein binding"/>
    <property type="evidence" value="ECO:0000353"/>
    <property type="project" value="IntAct"/>
</dbReference>
<dbReference type="GO" id="GO:0019966">
    <property type="term" value="F:interleukin-1 binding"/>
    <property type="evidence" value="ECO:0000353"/>
    <property type="project" value="UniProtKB"/>
</dbReference>
<dbReference type="GO" id="GO:0071347">
    <property type="term" value="P:cellular response to interleukin-1"/>
    <property type="evidence" value="ECO:0000270"/>
    <property type="project" value="UniProtKB"/>
</dbReference>
<dbReference type="GO" id="GO:0071222">
    <property type="term" value="P:cellular response to lipopolysaccharide"/>
    <property type="evidence" value="ECO:0000270"/>
    <property type="project" value="UniProtKB"/>
</dbReference>
<dbReference type="GO" id="GO:1900016">
    <property type="term" value="P:negative regulation of cytokine production involved in inflammatory response"/>
    <property type="evidence" value="ECO:0000315"/>
    <property type="project" value="UniProtKB"/>
</dbReference>
<dbReference type="GO" id="GO:0032691">
    <property type="term" value="P:negative regulation of interleukin-1 beta production"/>
    <property type="evidence" value="ECO:0000315"/>
    <property type="project" value="UniProtKB"/>
</dbReference>
<dbReference type="GO" id="GO:0010955">
    <property type="term" value="P:negative regulation of protein processing"/>
    <property type="evidence" value="ECO:0000314"/>
    <property type="project" value="UniProtKB"/>
</dbReference>
<dbReference type="GO" id="GO:0050727">
    <property type="term" value="P:regulation of inflammatory response"/>
    <property type="evidence" value="ECO:0000318"/>
    <property type="project" value="GO_Central"/>
</dbReference>
<dbReference type="CDD" id="cd08320">
    <property type="entry name" value="Pyrin_NALPs"/>
    <property type="match status" value="1"/>
</dbReference>
<dbReference type="FunFam" id="1.10.533.10:FF:000074">
    <property type="entry name" value="NLR family pyrin domain containing 7"/>
    <property type="match status" value="1"/>
</dbReference>
<dbReference type="FunFam" id="3.40.50.300:FF:001341">
    <property type="entry name" value="NLR family pyrin domain containing 7"/>
    <property type="match status" value="1"/>
</dbReference>
<dbReference type="Gene3D" id="1.10.533.10">
    <property type="entry name" value="Death Domain, Fas"/>
    <property type="match status" value="1"/>
</dbReference>
<dbReference type="Gene3D" id="3.40.50.300">
    <property type="entry name" value="P-loop containing nucleotide triphosphate hydrolases"/>
    <property type="match status" value="1"/>
</dbReference>
<dbReference type="Gene3D" id="3.80.10.10">
    <property type="entry name" value="Ribonuclease Inhibitor"/>
    <property type="match status" value="1"/>
</dbReference>
<dbReference type="InterPro" id="IPR004020">
    <property type="entry name" value="DAPIN"/>
</dbReference>
<dbReference type="InterPro" id="IPR011029">
    <property type="entry name" value="DEATH-like_dom_sf"/>
</dbReference>
<dbReference type="InterPro" id="IPR001611">
    <property type="entry name" value="Leu-rich_rpt"/>
</dbReference>
<dbReference type="InterPro" id="IPR032675">
    <property type="entry name" value="LRR_dom_sf"/>
</dbReference>
<dbReference type="InterPro" id="IPR007111">
    <property type="entry name" value="NACHT_NTPase"/>
</dbReference>
<dbReference type="InterPro" id="IPR041267">
    <property type="entry name" value="NLRP_HD2"/>
</dbReference>
<dbReference type="InterPro" id="IPR050637">
    <property type="entry name" value="NLRP_innate_immun_reg"/>
</dbReference>
<dbReference type="InterPro" id="IPR041075">
    <property type="entry name" value="NOD1/2_WH"/>
</dbReference>
<dbReference type="InterPro" id="IPR027417">
    <property type="entry name" value="P-loop_NTPase"/>
</dbReference>
<dbReference type="PANTHER" id="PTHR45690">
    <property type="entry name" value="NACHT, LRR AND PYD DOMAINS-CONTAINING PROTEIN 12"/>
    <property type="match status" value="1"/>
</dbReference>
<dbReference type="PANTHER" id="PTHR45690:SF20">
    <property type="entry name" value="NACHT, LRR AND PYD DOMAINS-CONTAINING PROTEIN 7"/>
    <property type="match status" value="1"/>
</dbReference>
<dbReference type="Pfam" id="PF13516">
    <property type="entry name" value="LRR_6"/>
    <property type="match status" value="2"/>
</dbReference>
<dbReference type="Pfam" id="PF05729">
    <property type="entry name" value="NACHT"/>
    <property type="match status" value="1"/>
</dbReference>
<dbReference type="Pfam" id="PF17776">
    <property type="entry name" value="NLRC4_HD2"/>
    <property type="match status" value="1"/>
</dbReference>
<dbReference type="Pfam" id="PF17779">
    <property type="entry name" value="NOD2_WH"/>
    <property type="match status" value="1"/>
</dbReference>
<dbReference type="Pfam" id="PF02758">
    <property type="entry name" value="PYRIN"/>
    <property type="match status" value="1"/>
</dbReference>
<dbReference type="SMART" id="SM00368">
    <property type="entry name" value="LRR_RI"/>
    <property type="match status" value="5"/>
</dbReference>
<dbReference type="SMART" id="SM01289">
    <property type="entry name" value="PYRIN"/>
    <property type="match status" value="1"/>
</dbReference>
<dbReference type="SUPFAM" id="SSF47986">
    <property type="entry name" value="DEATH domain"/>
    <property type="match status" value="1"/>
</dbReference>
<dbReference type="SUPFAM" id="SSF52540">
    <property type="entry name" value="P-loop containing nucleoside triphosphate hydrolases"/>
    <property type="match status" value="1"/>
</dbReference>
<dbReference type="SUPFAM" id="SSF52047">
    <property type="entry name" value="RNI-like"/>
    <property type="match status" value="1"/>
</dbReference>
<dbReference type="PROSITE" id="PS50824">
    <property type="entry name" value="DAPIN"/>
    <property type="match status" value="1"/>
</dbReference>
<dbReference type="PROSITE" id="PS50837">
    <property type="entry name" value="NACHT"/>
    <property type="match status" value="1"/>
</dbReference>
<name>NALP7_HUMAN</name>
<reference key="1">
    <citation type="journal article" date="2002" name="J. Biol. Chem.">
        <title>PYPAF7, a novel PYRIN-containing Apaf1-like protein that regulates activation of NF-kappa B and caspase-1-dependent cytokine processing.</title>
        <authorList>
            <person name="Wang L."/>
            <person name="Manji G.A."/>
            <person name="Grenier J.M."/>
            <person name="Al-Garawi A."/>
            <person name="Merriam S."/>
            <person name="Lora J.M."/>
            <person name="Geddes B.J."/>
            <person name="Briskin M."/>
            <person name="DiStefano P.S."/>
            <person name="Bertin J."/>
        </authorList>
    </citation>
    <scope>NUCLEOTIDE SEQUENCE [MRNA] (ISOFORM 1)</scope>
</reference>
<reference key="2">
    <citation type="journal article" date="2003" name="Nat. Rev. Mol. Cell Biol.">
        <title>NALPs: a novel protein family involved in inflammation.</title>
        <authorList>
            <person name="Tschopp J."/>
            <person name="Martinon F."/>
            <person name="Burns K."/>
        </authorList>
    </citation>
    <scope>NUCLEOTIDE SEQUENCE [MRNA] (ISOFORM 1)</scope>
</reference>
<reference key="3">
    <citation type="journal article" date="2004" name="Nature">
        <title>The DNA sequence and biology of human chromosome 19.</title>
        <authorList>
            <person name="Grimwood J."/>
            <person name="Gordon L.A."/>
            <person name="Olsen A.S."/>
            <person name="Terry A."/>
            <person name="Schmutz J."/>
            <person name="Lamerdin J.E."/>
            <person name="Hellsten U."/>
            <person name="Goodstein D."/>
            <person name="Couronne O."/>
            <person name="Tran-Gyamfi M."/>
            <person name="Aerts A."/>
            <person name="Altherr M."/>
            <person name="Ashworth L."/>
            <person name="Bajorek E."/>
            <person name="Black S."/>
            <person name="Branscomb E."/>
            <person name="Caenepeel S."/>
            <person name="Carrano A.V."/>
            <person name="Caoile C."/>
            <person name="Chan Y.M."/>
            <person name="Christensen M."/>
            <person name="Cleland C.A."/>
            <person name="Copeland A."/>
            <person name="Dalin E."/>
            <person name="Dehal P."/>
            <person name="Denys M."/>
            <person name="Detter J.C."/>
            <person name="Escobar J."/>
            <person name="Flowers D."/>
            <person name="Fotopulos D."/>
            <person name="Garcia C."/>
            <person name="Georgescu A.M."/>
            <person name="Glavina T."/>
            <person name="Gomez M."/>
            <person name="Gonzales E."/>
            <person name="Groza M."/>
            <person name="Hammon N."/>
            <person name="Hawkins T."/>
            <person name="Haydu L."/>
            <person name="Ho I."/>
            <person name="Huang W."/>
            <person name="Israni S."/>
            <person name="Jett J."/>
            <person name="Kadner K."/>
            <person name="Kimball H."/>
            <person name="Kobayashi A."/>
            <person name="Larionov V."/>
            <person name="Leem S.-H."/>
            <person name="Lopez F."/>
            <person name="Lou Y."/>
            <person name="Lowry S."/>
            <person name="Malfatti S."/>
            <person name="Martinez D."/>
            <person name="McCready P.M."/>
            <person name="Medina C."/>
            <person name="Morgan J."/>
            <person name="Nelson K."/>
            <person name="Nolan M."/>
            <person name="Ovcharenko I."/>
            <person name="Pitluck S."/>
            <person name="Pollard M."/>
            <person name="Popkie A.P."/>
            <person name="Predki P."/>
            <person name="Quan G."/>
            <person name="Ramirez L."/>
            <person name="Rash S."/>
            <person name="Retterer J."/>
            <person name="Rodriguez A."/>
            <person name="Rogers S."/>
            <person name="Salamov A."/>
            <person name="Salazar A."/>
            <person name="She X."/>
            <person name="Smith D."/>
            <person name="Slezak T."/>
            <person name="Solovyev V."/>
            <person name="Thayer N."/>
            <person name="Tice H."/>
            <person name="Tsai M."/>
            <person name="Ustaszewska A."/>
            <person name="Vo N."/>
            <person name="Wagner M."/>
            <person name="Wheeler J."/>
            <person name="Wu K."/>
            <person name="Xie G."/>
            <person name="Yang J."/>
            <person name="Dubchak I."/>
            <person name="Furey T.S."/>
            <person name="DeJong P."/>
            <person name="Dickson M."/>
            <person name="Gordon D."/>
            <person name="Eichler E.E."/>
            <person name="Pennacchio L.A."/>
            <person name="Richardson P."/>
            <person name="Stubbs L."/>
            <person name="Rokhsar D.S."/>
            <person name="Myers R.M."/>
            <person name="Rubin E.M."/>
            <person name="Lucas S.M."/>
        </authorList>
    </citation>
    <scope>NUCLEOTIDE SEQUENCE [LARGE SCALE GENOMIC DNA]</scope>
</reference>
<reference key="4">
    <citation type="journal article" date="2004" name="Genome Res.">
        <title>The status, quality, and expansion of the NIH full-length cDNA project: the Mammalian Gene Collection (MGC).</title>
        <authorList>
            <consortium name="The MGC Project Team"/>
        </authorList>
    </citation>
    <scope>NUCLEOTIDE SEQUENCE [LARGE SCALE MRNA] (ISOFORM 3)</scope>
    <scope>VARIANT THR-481</scope>
</reference>
<reference key="5">
    <citation type="journal article" date="2003" name="Nat. Rev. Immunol.">
        <title>NODs: intracellular proteins involved in inflammation and apoptosis.</title>
        <authorList>
            <person name="Inohara N."/>
            <person name="Nunez G."/>
        </authorList>
    </citation>
    <scope>IDENTIFICATION (ISOFORM 2)</scope>
</reference>
<reference key="6">
    <citation type="journal article" date="2005" name="J. Biol. Chem.">
        <title>PYPAF3, a PYRIN-containing APAF-1-like protein, is a feedback regulator of caspase-1-dependent interleukin-1beta secretion.</title>
        <authorList>
            <person name="Kinoshita T."/>
            <person name="Wang Y."/>
            <person name="Hasegawa M."/>
            <person name="Imamura R."/>
            <person name="Suda T."/>
        </authorList>
    </citation>
    <scope>FUNCTION</scope>
    <scope>INTERACTION WITH CASP1 AND IL1B</scope>
    <scope>TISSUE SPECIFICITY</scope>
</reference>
<reference key="7">
    <citation type="journal article" date="2010" name="J. Biol. Chem.">
        <title>Three-dimensional structure of the NLRP7 pyrin domain: insight into pyrin-pyrin-mediated effector domain signaling in innate immunity.</title>
        <authorList>
            <person name="Pinheiro A.S."/>
            <person name="Proell M."/>
            <person name="Eibl C."/>
            <person name="Page R."/>
            <person name="Schwarzenbacher R."/>
            <person name="Peti W."/>
        </authorList>
    </citation>
    <scope>STRUCTURE BY NMR OF 1-96</scope>
</reference>
<reference key="8">
    <citation type="journal article" date="2006" name="Nat. Genet.">
        <title>Mutations in NALP7 cause recurrent hydatidiform moles and reproductive wastage in humans.</title>
        <authorList>
            <person name="Murdoch S."/>
            <person name="Djuric U."/>
            <person name="Mazhar B."/>
            <person name="Seoud M."/>
            <person name="Khan R."/>
            <person name="Kuick R."/>
            <person name="Bagga R."/>
            <person name="Kircheisen R."/>
            <person name="Ao A."/>
            <person name="Ratti B."/>
            <person name="Hanash S."/>
            <person name="Rouleau G.A."/>
            <person name="Slim R."/>
        </authorList>
    </citation>
    <scope>VARIANTS HYDM1 TRP-693; PRO-693 AND SER-913</scope>
    <scope>TISSUE SPECIFICITY</scope>
</reference>
<reference key="9">
    <citation type="journal article" date="2009" name="J. Med. Genet.">
        <title>Identification of 13 novel NLRP7 mutations in 20 families with recurrent hydatidiform mole; missense mutations cluster in the leucine-rich region.</title>
        <authorList>
            <person name="Wang C.M."/>
            <person name="Dixon P.H."/>
            <person name="Decordova S."/>
            <person name="Hodges M.D."/>
            <person name="Sebire N.J."/>
            <person name="Ozalp S."/>
            <person name="Fallahian M."/>
            <person name="Sensi A."/>
            <person name="Ashrafi F."/>
            <person name="Repiska V."/>
            <person name="Zhao J."/>
            <person name="Xiang Y."/>
            <person name="Savage P.M."/>
            <person name="Seckl M.J."/>
            <person name="Fisher R.A."/>
        </authorList>
    </citation>
    <scope>VARIANTS HYDM1 ARG-398; SER-651; TRP-693; PRO-693; GLN-693; ALA-716; TRP-721; TYR-761 AND SER-913</scope>
</reference>
<reference key="10">
    <citation type="journal article" date="2013" name="Mol. Hum. Reprod.">
        <title>NLRP7 or KHDC3L genes and the etiology of molar pregnancies and recurrent miscarriage.</title>
        <authorList>
            <person name="Andreasen L."/>
            <person name="Christiansen O.B."/>
            <person name="Niemann I."/>
            <person name="Bolund L."/>
            <person name="Sunde L."/>
        </authorList>
    </citation>
    <scope>VARIANTS HYDM1 ARG-310; ILE-311; ILE-319; ASN-379; THR-481; ARG-511; VAL-719 AND THR-799</scope>
</reference>
<gene>
    <name type="primary">NLRP7</name>
    <name type="synonym">NALP7</name>
    <name type="synonym">NOD12</name>
    <name type="synonym">PYPAF3</name>
</gene>
<sequence>MTSPQLEWTLQTLLEQLNEDELKSFKSLLWAFPLEDVLQKTPWSEVEEADGKKLAEILVNTSSENWIRNATVNILEEMNLTELCKMAKAEMMEDGQVQEIDNPELGDAEEDSELAKPGEKEGWRNSMEKQSLVWKNTFWQGDIDNFHDDVTLRNQRFIPFLNPRTPRKLTPYTVVLHGPAGVGKTTLAKKCMLDWTDCNLSPTLRYAFYLSCKELSRMGPCSFAELISKDWPELQDDIPSILAQAQRILFVVDGLDELKVPPGALIQDICGDWEKKKPVPVLLGSLLKRKMLPRAALLVTTRPRALRDLQLLAQQPIYVRVEGFLEEDRRAYFLRHFGDEDQAMRAFELMRSNAALFQLGSAPAVCWIVCTTLKLQMEKGEDPVPTCLTRTGLFLRFLCSRFPQGAQLRGALRTLSLLAAQGLWAQMSVFHREDLERLGVQESDLRLFLDGDILRQDRVSKGCYSFIHLSFQQFLTALFYALEKEEGEDRDGHAWDIGDVQKLLSGEERLKNPDLIQVGHFLFGLANEKRAKELEATFGCRMSPDIKQELLQCKAHLHANKPLSVTDLKEVLGCLYESQEEELAKVVVAPFKEISIHLTNTSEVMHCSFSLKHCQDLQKLSLQVAKGVFLENYMDFELDIEFERCTYLTIPNWARQDLRSLRLWTDFCSLFSSNSNLKFLEVKQSFLSDSSVRILCDHVTRSTCHLQKVEIKNVTPDTAYRDFCLAFIGKKTLTHLTLAGHIEWERTMMLMLCDLLRNHKCNLQYLRLGGHCATPEQWAEFFYVLKANQSLKHLRLSANVLLDEGAMLLYKTMTRPKHFLQMLSLENCRLTEASCKDLAAVLVVSKKLTHLCLAKNPIGDTGVKFLCEGLSYPDCKLQTLVLQQCSITKLGCRYLSEALQEACSLTNLDLSINQIARGLWILCQALENPNCNLKHLRLKTYETNLEIKKLLEEVKEKNPKLTIDCNASGATAPPCCDFFC</sequence>
<accession>Q8WX94</accession>
<accession>E9PE16</accession>
<accession>Q32MH8</accession>
<accession>Q7RTR1</accession>
<keyword id="KW-0002">3D-structure</keyword>
<keyword id="KW-0025">Alternative splicing</keyword>
<keyword id="KW-0067">ATP-binding</keyword>
<keyword id="KW-0225">Disease variant</keyword>
<keyword id="KW-0433">Leucine-rich repeat</keyword>
<keyword id="KW-0547">Nucleotide-binding</keyword>
<keyword id="KW-1267">Proteomics identification</keyword>
<keyword id="KW-1185">Reference proteome</keyword>
<keyword id="KW-0677">Repeat</keyword>